<gene>
    <name evidence="1" type="primary">astD</name>
    <name type="ordered locus">ECP_1692</name>
</gene>
<feature type="chain" id="PRO_0000262402" description="N-succinylglutamate 5-semialdehyde dehydrogenase">
    <location>
        <begin position="1"/>
        <end position="492"/>
    </location>
</feature>
<feature type="active site" evidence="1">
    <location>
        <position position="243"/>
    </location>
</feature>
<feature type="active site" evidence="1">
    <location>
        <position position="277"/>
    </location>
</feature>
<feature type="binding site" evidence="1">
    <location>
        <begin position="220"/>
        <end position="225"/>
    </location>
    <ligand>
        <name>NAD(+)</name>
        <dbReference type="ChEBI" id="CHEBI:57540"/>
    </ligand>
</feature>
<name>ASTD_ECOL5</name>
<comment type="function">
    <text evidence="1">Catalyzes the NAD-dependent reduction of succinylglutamate semialdehyde into succinylglutamate.</text>
</comment>
<comment type="catalytic activity">
    <reaction evidence="1">
        <text>N-succinyl-L-glutamate 5-semialdehyde + NAD(+) + H2O = N-succinyl-L-glutamate + NADH + 2 H(+)</text>
        <dbReference type="Rhea" id="RHEA:10812"/>
        <dbReference type="ChEBI" id="CHEBI:15377"/>
        <dbReference type="ChEBI" id="CHEBI:15378"/>
        <dbReference type="ChEBI" id="CHEBI:57540"/>
        <dbReference type="ChEBI" id="CHEBI:57945"/>
        <dbReference type="ChEBI" id="CHEBI:58520"/>
        <dbReference type="ChEBI" id="CHEBI:58763"/>
        <dbReference type="EC" id="1.2.1.71"/>
    </reaction>
</comment>
<comment type="pathway">
    <text evidence="1">Amino-acid degradation; L-arginine degradation via AST pathway; L-glutamate and succinate from L-arginine: step 4/5.</text>
</comment>
<comment type="similarity">
    <text evidence="1">Belongs to the aldehyde dehydrogenase family. AstD subfamily.</text>
</comment>
<sequence length="492" mass="53028">MTLWINGDWVTGQGALRVKRNPVSGEVLWQGNDADAAQVGQACRAARAAFPRWARLSFGDRQVRVERFAGLLESNKAELTAIIARETGKPRWEAATEVTAMINKIAISIKAYHVRTGEQRSEMPDGAASLRHRPHGVLAVFGPYNFPGHLPNGHIVPALLAGNTIIFKPSELTPWSGDAVMRLWQQAGLPPGVLNLVQGGRATGQALSALEDLDGLLFTGSANTGYQLHRQLSGQPEKILALEMGGNNPLIIDEVADIDAAVHLTIQSAFVTAGQRCTCARRLFLKSGTQGDAFLARLVAVSQRLTPGTWDDEPQPFIGGLISEQAAQQVVTAWQELEAMGGRTLLAPRLLQAGTSLLTPGIIEMTGVTGLPDEEVFGPLLRVWRYDTFDEAIRMANNTRFGLSCGLVSPEREKFDQLLLEARAGIVNWNKPLTGAASTAPFGGIGASGNHRPSAWYAADYCAWPMASLESDSLTLPATLNPGLDFSDEVVR</sequence>
<proteinExistence type="inferred from homology"/>
<keyword id="KW-0056">Arginine metabolism</keyword>
<keyword id="KW-0520">NAD</keyword>
<keyword id="KW-0560">Oxidoreductase</keyword>
<protein>
    <recommendedName>
        <fullName evidence="1">N-succinylglutamate 5-semialdehyde dehydrogenase</fullName>
        <ecNumber evidence="1">1.2.1.71</ecNumber>
    </recommendedName>
    <alternativeName>
        <fullName evidence="1">Succinylglutamic semialdehyde dehydrogenase</fullName>
        <shortName evidence="1">SGSD</shortName>
    </alternativeName>
</protein>
<organism>
    <name type="scientific">Escherichia coli O6:K15:H31 (strain 536 / UPEC)</name>
    <dbReference type="NCBI Taxonomy" id="362663"/>
    <lineage>
        <taxon>Bacteria</taxon>
        <taxon>Pseudomonadati</taxon>
        <taxon>Pseudomonadota</taxon>
        <taxon>Gammaproteobacteria</taxon>
        <taxon>Enterobacterales</taxon>
        <taxon>Enterobacteriaceae</taxon>
        <taxon>Escherichia</taxon>
    </lineage>
</organism>
<accession>Q0TH84</accession>
<evidence type="ECO:0000255" key="1">
    <source>
        <dbReference type="HAMAP-Rule" id="MF_01174"/>
    </source>
</evidence>
<dbReference type="EC" id="1.2.1.71" evidence="1"/>
<dbReference type="EMBL" id="CP000247">
    <property type="protein sequence ID" value="ABG69695.1"/>
    <property type="molecule type" value="Genomic_DNA"/>
</dbReference>
<dbReference type="RefSeq" id="WP_000177317.1">
    <property type="nucleotide sequence ID" value="NC_008253.1"/>
</dbReference>
<dbReference type="SMR" id="Q0TH84"/>
<dbReference type="KEGG" id="ecp:ECP_1692"/>
<dbReference type="HOGENOM" id="CLU_005391_1_0_6"/>
<dbReference type="UniPathway" id="UPA00185">
    <property type="reaction ID" value="UER00282"/>
</dbReference>
<dbReference type="Proteomes" id="UP000009182">
    <property type="component" value="Chromosome"/>
</dbReference>
<dbReference type="GO" id="GO:0004030">
    <property type="term" value="F:aldehyde dehydrogenase [NAD(P)+] activity"/>
    <property type="evidence" value="ECO:0007669"/>
    <property type="project" value="UniProtKB-ARBA"/>
</dbReference>
<dbReference type="GO" id="GO:0043824">
    <property type="term" value="F:succinylglutamate-semialdehyde dehydrogenase activity"/>
    <property type="evidence" value="ECO:0007669"/>
    <property type="project" value="UniProtKB-EC"/>
</dbReference>
<dbReference type="GO" id="GO:0019544">
    <property type="term" value="P:arginine catabolic process to glutamate"/>
    <property type="evidence" value="ECO:0007669"/>
    <property type="project" value="UniProtKB-UniRule"/>
</dbReference>
<dbReference type="GO" id="GO:0019545">
    <property type="term" value="P:arginine catabolic process to succinate"/>
    <property type="evidence" value="ECO:0007669"/>
    <property type="project" value="UniProtKB-UniRule"/>
</dbReference>
<dbReference type="CDD" id="cd07095">
    <property type="entry name" value="ALDH_SGSD_AstD"/>
    <property type="match status" value="1"/>
</dbReference>
<dbReference type="FunFam" id="3.40.309.10:FF:000013">
    <property type="entry name" value="N-succinylglutamate 5-semialdehyde dehydrogenase"/>
    <property type="match status" value="1"/>
</dbReference>
<dbReference type="FunFam" id="3.40.605.10:FF:000010">
    <property type="entry name" value="N-succinylglutamate 5-semialdehyde dehydrogenase"/>
    <property type="match status" value="1"/>
</dbReference>
<dbReference type="Gene3D" id="3.40.605.10">
    <property type="entry name" value="Aldehyde Dehydrogenase, Chain A, domain 1"/>
    <property type="match status" value="1"/>
</dbReference>
<dbReference type="Gene3D" id="3.40.309.10">
    <property type="entry name" value="Aldehyde Dehydrogenase, Chain A, domain 2"/>
    <property type="match status" value="1"/>
</dbReference>
<dbReference type="HAMAP" id="MF_01174">
    <property type="entry name" value="Aldedh_AstD"/>
    <property type="match status" value="1"/>
</dbReference>
<dbReference type="InterPro" id="IPR016161">
    <property type="entry name" value="Ald_DH/histidinol_DH"/>
</dbReference>
<dbReference type="InterPro" id="IPR016163">
    <property type="entry name" value="Ald_DH_C"/>
</dbReference>
<dbReference type="InterPro" id="IPR016160">
    <property type="entry name" value="Ald_DH_CS_CYS"/>
</dbReference>
<dbReference type="InterPro" id="IPR029510">
    <property type="entry name" value="Ald_DH_CS_GLU"/>
</dbReference>
<dbReference type="InterPro" id="IPR016162">
    <property type="entry name" value="Ald_DH_N"/>
</dbReference>
<dbReference type="InterPro" id="IPR015590">
    <property type="entry name" value="Aldehyde_DH_dom"/>
</dbReference>
<dbReference type="InterPro" id="IPR017649">
    <property type="entry name" value="SuccinylGlu_semiald_DH_AstD"/>
</dbReference>
<dbReference type="NCBIfam" id="TIGR03240">
    <property type="entry name" value="arg_catab_astD"/>
    <property type="match status" value="1"/>
</dbReference>
<dbReference type="NCBIfam" id="NF006992">
    <property type="entry name" value="PRK09457.1"/>
    <property type="match status" value="1"/>
</dbReference>
<dbReference type="PANTHER" id="PTHR11699">
    <property type="entry name" value="ALDEHYDE DEHYDROGENASE-RELATED"/>
    <property type="match status" value="1"/>
</dbReference>
<dbReference type="Pfam" id="PF00171">
    <property type="entry name" value="Aldedh"/>
    <property type="match status" value="1"/>
</dbReference>
<dbReference type="SUPFAM" id="SSF53720">
    <property type="entry name" value="ALDH-like"/>
    <property type="match status" value="1"/>
</dbReference>
<dbReference type="PROSITE" id="PS00070">
    <property type="entry name" value="ALDEHYDE_DEHYDR_CYS"/>
    <property type="match status" value="1"/>
</dbReference>
<dbReference type="PROSITE" id="PS00687">
    <property type="entry name" value="ALDEHYDE_DEHYDR_GLU"/>
    <property type="match status" value="1"/>
</dbReference>
<reference key="1">
    <citation type="journal article" date="2006" name="Mol. Microbiol.">
        <title>Role of pathogenicity island-associated integrases in the genome plasticity of uropathogenic Escherichia coli strain 536.</title>
        <authorList>
            <person name="Hochhut B."/>
            <person name="Wilde C."/>
            <person name="Balling G."/>
            <person name="Middendorf B."/>
            <person name="Dobrindt U."/>
            <person name="Brzuszkiewicz E."/>
            <person name="Gottschalk G."/>
            <person name="Carniel E."/>
            <person name="Hacker J."/>
        </authorList>
    </citation>
    <scope>NUCLEOTIDE SEQUENCE [LARGE SCALE GENOMIC DNA]</scope>
    <source>
        <strain>536 / UPEC</strain>
    </source>
</reference>